<name>RS20_LEPIC</name>
<dbReference type="EMBL" id="AE016823">
    <property type="protein sequence ID" value="AAS69069.1"/>
    <property type="molecule type" value="Genomic_DNA"/>
</dbReference>
<dbReference type="RefSeq" id="WP_001274025.1">
    <property type="nucleotide sequence ID" value="NC_005823.1"/>
</dbReference>
<dbReference type="SMR" id="Q72V55"/>
<dbReference type="GeneID" id="61143800"/>
<dbReference type="KEGG" id="lic:LIC_10448"/>
<dbReference type="HOGENOM" id="CLU_160655_3_1_12"/>
<dbReference type="Proteomes" id="UP000007037">
    <property type="component" value="Chromosome I"/>
</dbReference>
<dbReference type="GO" id="GO:0005829">
    <property type="term" value="C:cytosol"/>
    <property type="evidence" value="ECO:0007669"/>
    <property type="project" value="TreeGrafter"/>
</dbReference>
<dbReference type="GO" id="GO:0015935">
    <property type="term" value="C:small ribosomal subunit"/>
    <property type="evidence" value="ECO:0007669"/>
    <property type="project" value="TreeGrafter"/>
</dbReference>
<dbReference type="GO" id="GO:0070181">
    <property type="term" value="F:small ribosomal subunit rRNA binding"/>
    <property type="evidence" value="ECO:0007669"/>
    <property type="project" value="TreeGrafter"/>
</dbReference>
<dbReference type="GO" id="GO:0003735">
    <property type="term" value="F:structural constituent of ribosome"/>
    <property type="evidence" value="ECO:0007669"/>
    <property type="project" value="InterPro"/>
</dbReference>
<dbReference type="GO" id="GO:0006412">
    <property type="term" value="P:translation"/>
    <property type="evidence" value="ECO:0007669"/>
    <property type="project" value="UniProtKB-UniRule"/>
</dbReference>
<dbReference type="FunFam" id="1.20.58.110:FF:000004">
    <property type="entry name" value="30S ribosomal protein S20"/>
    <property type="match status" value="1"/>
</dbReference>
<dbReference type="Gene3D" id="1.20.58.110">
    <property type="entry name" value="Ribosomal protein S20"/>
    <property type="match status" value="1"/>
</dbReference>
<dbReference type="HAMAP" id="MF_00500">
    <property type="entry name" value="Ribosomal_bS20"/>
    <property type="match status" value="1"/>
</dbReference>
<dbReference type="InterPro" id="IPR002583">
    <property type="entry name" value="Ribosomal_bS20"/>
</dbReference>
<dbReference type="InterPro" id="IPR036510">
    <property type="entry name" value="Ribosomal_bS20_sf"/>
</dbReference>
<dbReference type="NCBIfam" id="TIGR00029">
    <property type="entry name" value="S20"/>
    <property type="match status" value="1"/>
</dbReference>
<dbReference type="PANTHER" id="PTHR33398">
    <property type="entry name" value="30S RIBOSOMAL PROTEIN S20"/>
    <property type="match status" value="1"/>
</dbReference>
<dbReference type="PANTHER" id="PTHR33398:SF1">
    <property type="entry name" value="SMALL RIBOSOMAL SUBUNIT PROTEIN BS20C"/>
    <property type="match status" value="1"/>
</dbReference>
<dbReference type="Pfam" id="PF01649">
    <property type="entry name" value="Ribosomal_S20p"/>
    <property type="match status" value="1"/>
</dbReference>
<dbReference type="SUPFAM" id="SSF46992">
    <property type="entry name" value="Ribosomal protein S20"/>
    <property type="match status" value="1"/>
</dbReference>
<comment type="function">
    <text evidence="1">Binds directly to 16S ribosomal RNA.</text>
</comment>
<comment type="similarity">
    <text evidence="1">Belongs to the bacterial ribosomal protein bS20 family.</text>
</comment>
<feature type="chain" id="PRO_0000167982" description="Small ribosomal subunit protein bS20">
    <location>
        <begin position="1"/>
        <end position="88"/>
    </location>
</feature>
<feature type="region of interest" description="Disordered" evidence="2">
    <location>
        <begin position="1"/>
        <end position="31"/>
    </location>
</feature>
<feature type="region of interest" description="Disordered" evidence="2">
    <location>
        <begin position="69"/>
        <end position="88"/>
    </location>
</feature>
<feature type="compositionally biased region" description="Basic and acidic residues" evidence="2">
    <location>
        <begin position="1"/>
        <end position="11"/>
    </location>
</feature>
<proteinExistence type="inferred from homology"/>
<gene>
    <name evidence="1" type="primary">rpsT</name>
    <name type="ordered locus">LIC_10448</name>
</gene>
<organism>
    <name type="scientific">Leptospira interrogans serogroup Icterohaemorrhagiae serovar copenhageni (strain Fiocruz L1-130)</name>
    <dbReference type="NCBI Taxonomy" id="267671"/>
    <lineage>
        <taxon>Bacteria</taxon>
        <taxon>Pseudomonadati</taxon>
        <taxon>Spirochaetota</taxon>
        <taxon>Spirochaetia</taxon>
        <taxon>Leptospirales</taxon>
        <taxon>Leptospiraceae</taxon>
        <taxon>Leptospira</taxon>
    </lineage>
</organism>
<evidence type="ECO:0000255" key="1">
    <source>
        <dbReference type="HAMAP-Rule" id="MF_00500"/>
    </source>
</evidence>
<evidence type="ECO:0000256" key="2">
    <source>
        <dbReference type="SAM" id="MobiDB-lite"/>
    </source>
</evidence>
<evidence type="ECO:0000305" key="3"/>
<reference key="1">
    <citation type="journal article" date="2004" name="J. Bacteriol.">
        <title>Comparative genomics of two Leptospira interrogans serovars reveals novel insights into physiology and pathogenesis.</title>
        <authorList>
            <person name="Nascimento A.L.T.O."/>
            <person name="Ko A.I."/>
            <person name="Martins E.A.L."/>
            <person name="Monteiro-Vitorello C.B."/>
            <person name="Ho P.L."/>
            <person name="Haake D.A."/>
            <person name="Verjovski-Almeida S."/>
            <person name="Hartskeerl R.A."/>
            <person name="Marques M.V."/>
            <person name="Oliveira M.C."/>
            <person name="Menck C.F.M."/>
            <person name="Leite L.C.C."/>
            <person name="Carrer H."/>
            <person name="Coutinho L.L."/>
            <person name="Degrave W.M."/>
            <person name="Dellagostin O.A."/>
            <person name="El-Dorry H."/>
            <person name="Ferro E.S."/>
            <person name="Ferro M.I.T."/>
            <person name="Furlan L.R."/>
            <person name="Gamberini M."/>
            <person name="Giglioti E.A."/>
            <person name="Goes-Neto A."/>
            <person name="Goldman G.H."/>
            <person name="Goldman M.H.S."/>
            <person name="Harakava R."/>
            <person name="Jeronimo S.M.B."/>
            <person name="Junqueira-de-Azevedo I.L.M."/>
            <person name="Kimura E.T."/>
            <person name="Kuramae E.E."/>
            <person name="Lemos E.G.M."/>
            <person name="Lemos M.V.F."/>
            <person name="Marino C.L."/>
            <person name="Nunes L.R."/>
            <person name="de Oliveira R.C."/>
            <person name="Pereira G.G."/>
            <person name="Reis M.S."/>
            <person name="Schriefer A."/>
            <person name="Siqueira W.J."/>
            <person name="Sommer P."/>
            <person name="Tsai S.M."/>
            <person name="Simpson A.J.G."/>
            <person name="Ferro J.A."/>
            <person name="Camargo L.E.A."/>
            <person name="Kitajima J.P."/>
            <person name="Setubal J.C."/>
            <person name="Van Sluys M.A."/>
        </authorList>
    </citation>
    <scope>NUCLEOTIDE SEQUENCE [LARGE SCALE GENOMIC DNA]</scope>
    <source>
        <strain>Fiocruz L1-130</strain>
    </source>
</reference>
<keyword id="KW-0687">Ribonucleoprotein</keyword>
<keyword id="KW-0689">Ribosomal protein</keyword>
<keyword id="KW-0694">RNA-binding</keyword>
<keyword id="KW-0699">rRNA-binding</keyword>
<sequence>MANIKSSEKDIRRTKRRNAANSQNRSRLRTQAKKVLKAIKEKDQKAAMTLFIEYTSLLDKAAKTNLIHSKNADRKKSRMAKRLNSSAA</sequence>
<accession>Q72V55</accession>
<protein>
    <recommendedName>
        <fullName evidence="1">Small ribosomal subunit protein bS20</fullName>
    </recommendedName>
    <alternativeName>
        <fullName evidence="3">30S ribosomal protein S20</fullName>
    </alternativeName>
</protein>